<keyword id="KW-0472">Membrane</keyword>
<keyword id="KW-0496">Mitochondrion</keyword>
<keyword id="KW-0999">Mitochondrion inner membrane</keyword>
<keyword id="KW-1185">Reference proteome</keyword>
<keyword id="KW-0677">Repeat</keyword>
<keyword id="KW-0812">Transmembrane</keyword>
<keyword id="KW-1133">Transmembrane helix</keyword>
<keyword id="KW-0813">Transport</keyword>
<evidence type="ECO:0000250" key="1"/>
<evidence type="ECO:0000255" key="2"/>
<evidence type="ECO:0000305" key="3"/>
<proteinExistence type="inferred from homology"/>
<reference key="1">
    <citation type="journal article" date="2002" name="Nature">
        <title>Sequence and analysis of chromosome 2 of Dictyostelium discoideum.</title>
        <authorList>
            <person name="Gloeckner G."/>
            <person name="Eichinger L."/>
            <person name="Szafranski K."/>
            <person name="Pachebat J.A."/>
            <person name="Bankier A.T."/>
            <person name="Dear P.H."/>
            <person name="Lehmann R."/>
            <person name="Baumgart C."/>
            <person name="Parra G."/>
            <person name="Abril J.F."/>
            <person name="Guigo R."/>
            <person name="Kumpf K."/>
            <person name="Tunggal B."/>
            <person name="Cox E.C."/>
            <person name="Quail M.A."/>
            <person name="Platzer M."/>
            <person name="Rosenthal A."/>
            <person name="Noegel A.A."/>
        </authorList>
    </citation>
    <scope>NUCLEOTIDE SEQUENCE [LARGE SCALE GENOMIC DNA]</scope>
    <source>
        <strain>AX4</strain>
    </source>
</reference>
<reference key="2">
    <citation type="journal article" date="2005" name="Nature">
        <title>The genome of the social amoeba Dictyostelium discoideum.</title>
        <authorList>
            <person name="Eichinger L."/>
            <person name="Pachebat J.A."/>
            <person name="Gloeckner G."/>
            <person name="Rajandream M.A."/>
            <person name="Sucgang R."/>
            <person name="Berriman M."/>
            <person name="Song J."/>
            <person name="Olsen R."/>
            <person name="Szafranski K."/>
            <person name="Xu Q."/>
            <person name="Tunggal B."/>
            <person name="Kummerfeld S."/>
            <person name="Madera M."/>
            <person name="Konfortov B.A."/>
            <person name="Rivero F."/>
            <person name="Bankier A.T."/>
            <person name="Lehmann R."/>
            <person name="Hamlin N."/>
            <person name="Davies R."/>
            <person name="Gaudet P."/>
            <person name="Fey P."/>
            <person name="Pilcher K."/>
            <person name="Chen G."/>
            <person name="Saunders D."/>
            <person name="Sodergren E.J."/>
            <person name="Davis P."/>
            <person name="Kerhornou A."/>
            <person name="Nie X."/>
            <person name="Hall N."/>
            <person name="Anjard C."/>
            <person name="Hemphill L."/>
            <person name="Bason N."/>
            <person name="Farbrother P."/>
            <person name="Desany B."/>
            <person name="Just E."/>
            <person name="Morio T."/>
            <person name="Rost R."/>
            <person name="Churcher C.M."/>
            <person name="Cooper J."/>
            <person name="Haydock S."/>
            <person name="van Driessche N."/>
            <person name="Cronin A."/>
            <person name="Goodhead I."/>
            <person name="Muzny D.M."/>
            <person name="Mourier T."/>
            <person name="Pain A."/>
            <person name="Lu M."/>
            <person name="Harper D."/>
            <person name="Lindsay R."/>
            <person name="Hauser H."/>
            <person name="James K.D."/>
            <person name="Quiles M."/>
            <person name="Madan Babu M."/>
            <person name="Saito T."/>
            <person name="Buchrieser C."/>
            <person name="Wardroper A."/>
            <person name="Felder M."/>
            <person name="Thangavelu M."/>
            <person name="Johnson D."/>
            <person name="Knights A."/>
            <person name="Loulseged H."/>
            <person name="Mungall K.L."/>
            <person name="Oliver K."/>
            <person name="Price C."/>
            <person name="Quail M.A."/>
            <person name="Urushihara H."/>
            <person name="Hernandez J."/>
            <person name="Rabbinowitsch E."/>
            <person name="Steffen D."/>
            <person name="Sanders M."/>
            <person name="Ma J."/>
            <person name="Kohara Y."/>
            <person name="Sharp S."/>
            <person name="Simmonds M.N."/>
            <person name="Spiegler S."/>
            <person name="Tivey A."/>
            <person name="Sugano S."/>
            <person name="White B."/>
            <person name="Walker D."/>
            <person name="Woodward J.R."/>
            <person name="Winckler T."/>
            <person name="Tanaka Y."/>
            <person name="Shaulsky G."/>
            <person name="Schleicher M."/>
            <person name="Weinstock G.M."/>
            <person name="Rosenthal A."/>
            <person name="Cox E.C."/>
            <person name="Chisholm R.L."/>
            <person name="Gibbs R.A."/>
            <person name="Loomis W.F."/>
            <person name="Platzer M."/>
            <person name="Kay R.R."/>
            <person name="Williams J.G."/>
            <person name="Dear P.H."/>
            <person name="Noegel A.A."/>
            <person name="Barrell B.G."/>
            <person name="Kuspa A."/>
        </authorList>
    </citation>
    <scope>NUCLEOTIDE SEQUENCE [LARGE SCALE GENOMIC DNA]</scope>
    <source>
        <strain>AX4</strain>
    </source>
</reference>
<reference key="3">
    <citation type="journal article" date="2007" name="Biochimie">
        <title>Mitochondrial carrier family: repertoire and peculiarities of the cellular slime mould Dictyostelium discoideum.</title>
        <authorList>
            <person name="Satre M."/>
            <person name="Mattei S."/>
            <person name="Aubry L."/>
            <person name="Gaudet P."/>
            <person name="Pelosi L."/>
            <person name="Brandolin G."/>
            <person name="Klein G."/>
        </authorList>
    </citation>
    <scope>REVIEW</scope>
</reference>
<feature type="chain" id="PRO_0000385536" description="Mitochondrial substrate carrier family protein ucpA">
    <location>
        <begin position="1"/>
        <end position="306"/>
    </location>
</feature>
<feature type="topological domain" description="Mitochondrial intermembrane" evidence="1">
    <location>
        <begin position="1"/>
        <end position="15"/>
    </location>
</feature>
<feature type="transmembrane region" description="Helical; Name=1" evidence="2">
    <location>
        <begin position="16"/>
        <end position="36"/>
    </location>
</feature>
<feature type="topological domain" description="Mitochondrial matrix" evidence="1">
    <location>
        <begin position="37"/>
        <end position="83"/>
    </location>
</feature>
<feature type="transmembrane region" description="Helical; Name=2" evidence="2">
    <location>
        <begin position="84"/>
        <end position="103"/>
    </location>
</feature>
<feature type="topological domain" description="Mitochondrial intermembrane" evidence="1">
    <location>
        <begin position="104"/>
        <end position="117"/>
    </location>
</feature>
<feature type="transmembrane region" description="Helical; Name=3" evidence="2">
    <location>
        <begin position="118"/>
        <end position="138"/>
    </location>
</feature>
<feature type="topological domain" description="Mitochondrial matrix" evidence="1">
    <location>
        <begin position="139"/>
        <end position="174"/>
    </location>
</feature>
<feature type="transmembrane region" description="Helical; Name=4" evidence="2">
    <location>
        <begin position="175"/>
        <end position="195"/>
    </location>
</feature>
<feature type="topological domain" description="Mitochondrial intermembrane" evidence="1">
    <location>
        <begin position="196"/>
        <end position="211"/>
    </location>
</feature>
<feature type="transmembrane region" description="Helical; Name=5" evidence="2">
    <location>
        <begin position="212"/>
        <end position="232"/>
    </location>
</feature>
<feature type="topological domain" description="Mitochondrial matrix" evidence="1">
    <location>
        <begin position="233"/>
        <end position="276"/>
    </location>
</feature>
<feature type="transmembrane region" description="Helical; Name=6" evidence="2">
    <location>
        <begin position="277"/>
        <end position="295"/>
    </location>
</feature>
<feature type="topological domain" description="Mitochondrial intermembrane" evidence="1">
    <location>
        <begin position="296"/>
        <end position="306"/>
    </location>
</feature>
<feature type="repeat" description="Solcar 1">
    <location>
        <begin position="13"/>
        <end position="103"/>
    </location>
</feature>
<feature type="repeat" description="Solcar 2">
    <location>
        <begin position="112"/>
        <end position="204"/>
    </location>
</feature>
<feature type="repeat" description="Solcar 3">
    <location>
        <begin position="211"/>
        <end position="301"/>
    </location>
</feature>
<gene>
    <name type="primary">ucpA</name>
    <name type="synonym">slc25a35</name>
    <name type="ORF">DDB_G0271310</name>
</gene>
<protein>
    <recommendedName>
        <fullName>Mitochondrial substrate carrier family protein ucpA</fullName>
    </recommendedName>
    <alternativeName>
        <fullName>Solute carrier family 25 member 35 homolog</fullName>
    </alternativeName>
    <alternativeName>
        <fullName>Uncoupler protein A</fullName>
    </alternativeName>
</protein>
<sequence>MSVNLNNNKNNKNKVAIGFISGSLASICATTVTNPIELVKTRLQLQGELQLSQRIYNGVWDAFKQIYKTEGIRGLQSGLIPAYFSQATMQGIRLGSFDLISNALGAKPNQDYFFLKNLLAGATAGAIGAAAGSPFDLVKVRMQAANMYKNDPQFVGYSSSFAAFKQIIQKEGFKGLTRGMLTSAQRTAVGSAIQLSTYGSCKNLVLNFVDDGIYAYIISSMVAGFIVTFGMNPFDVARTRLYFQGKGNSHGEIYKGLMDCVYKTVKKEGFGAVYKGFWAHYLRLGPHTILTLVFWEQFKKLFSGEL</sequence>
<comment type="function">
    <text evidence="1">Mitochondrial solute carriers shuttle metabolites, nucleotides, and cofactors through the mitochondrial inner membrane. Transports oxaloacetate and sulfate (By similarity).</text>
</comment>
<comment type="subcellular location">
    <subcellularLocation>
        <location evidence="3">Mitochondrion inner membrane</location>
        <topology evidence="3">Multi-pass membrane protein</topology>
    </subcellularLocation>
</comment>
<comment type="miscellaneous">
    <text>Present with 5350 molecules/cell in log phase SD medium.</text>
</comment>
<comment type="similarity">
    <text evidence="3">Belongs to the mitochondrial carrier (TC 2.A.29) family.</text>
</comment>
<accession>Q55BF4</accession>
<name>UCPA_DICDI</name>
<organism>
    <name type="scientific">Dictyostelium discoideum</name>
    <name type="common">Social amoeba</name>
    <dbReference type="NCBI Taxonomy" id="44689"/>
    <lineage>
        <taxon>Eukaryota</taxon>
        <taxon>Amoebozoa</taxon>
        <taxon>Evosea</taxon>
        <taxon>Eumycetozoa</taxon>
        <taxon>Dictyostelia</taxon>
        <taxon>Dictyosteliales</taxon>
        <taxon>Dictyosteliaceae</taxon>
        <taxon>Dictyostelium</taxon>
    </lineage>
</organism>
<dbReference type="EMBL" id="AAFI02000006">
    <property type="protein sequence ID" value="EAL71785.1"/>
    <property type="molecule type" value="Genomic_DNA"/>
</dbReference>
<dbReference type="RefSeq" id="XP_645658.1">
    <property type="nucleotide sequence ID" value="XM_640566.1"/>
</dbReference>
<dbReference type="SMR" id="Q55BF4"/>
<dbReference type="FunCoup" id="Q55BF4">
    <property type="interactions" value="61"/>
</dbReference>
<dbReference type="PaxDb" id="44689-DDB0237606"/>
<dbReference type="EnsemblProtists" id="EAL71785">
    <property type="protein sequence ID" value="EAL71785"/>
    <property type="gene ID" value="DDB_G0271310"/>
</dbReference>
<dbReference type="GeneID" id="8617850"/>
<dbReference type="KEGG" id="ddi:DDB_G0271310"/>
<dbReference type="dictyBase" id="DDB_G0271310">
    <property type="gene designation" value="ucpA"/>
</dbReference>
<dbReference type="VEuPathDB" id="AmoebaDB:DDB_G0271310"/>
<dbReference type="eggNOG" id="KOG0755">
    <property type="taxonomic scope" value="Eukaryota"/>
</dbReference>
<dbReference type="HOGENOM" id="CLU_015166_14_3_1"/>
<dbReference type="InParanoid" id="Q55BF4"/>
<dbReference type="OMA" id="GFYDPMR"/>
<dbReference type="PhylomeDB" id="Q55BF4"/>
<dbReference type="PRO" id="PR:Q55BF4"/>
<dbReference type="Proteomes" id="UP000002195">
    <property type="component" value="Chromosome 2"/>
</dbReference>
<dbReference type="GO" id="GO:0005743">
    <property type="term" value="C:mitochondrial inner membrane"/>
    <property type="evidence" value="ECO:0007669"/>
    <property type="project" value="UniProtKB-SubCell"/>
</dbReference>
<dbReference type="GO" id="GO:0005739">
    <property type="term" value="C:mitochondrion"/>
    <property type="evidence" value="ECO:0000250"/>
    <property type="project" value="dictyBase"/>
</dbReference>
<dbReference type="GO" id="GO:0022857">
    <property type="term" value="F:transmembrane transporter activity"/>
    <property type="evidence" value="ECO:0000250"/>
    <property type="project" value="dictyBase"/>
</dbReference>
<dbReference type="GO" id="GO:0015729">
    <property type="term" value="P:oxaloacetate transport"/>
    <property type="evidence" value="ECO:0000250"/>
    <property type="project" value="dictyBase"/>
</dbReference>
<dbReference type="GO" id="GO:1902358">
    <property type="term" value="P:sulfate transmembrane transport"/>
    <property type="evidence" value="ECO:0000250"/>
    <property type="project" value="dictyBase"/>
</dbReference>
<dbReference type="Gene3D" id="1.50.40.10">
    <property type="entry name" value="Mitochondrial carrier domain"/>
    <property type="match status" value="1"/>
</dbReference>
<dbReference type="InterPro" id="IPR051508">
    <property type="entry name" value="Mito_Carrier_Antiporter"/>
</dbReference>
<dbReference type="InterPro" id="IPR018108">
    <property type="entry name" value="Mitochondrial_sb/sol_carrier"/>
</dbReference>
<dbReference type="InterPro" id="IPR023395">
    <property type="entry name" value="Mt_carrier_dom_sf"/>
</dbReference>
<dbReference type="PANTHER" id="PTHR45928">
    <property type="entry name" value="RE38146P"/>
    <property type="match status" value="1"/>
</dbReference>
<dbReference type="PANTHER" id="PTHR45928:SF1">
    <property type="entry name" value="RE38146P"/>
    <property type="match status" value="1"/>
</dbReference>
<dbReference type="Pfam" id="PF00153">
    <property type="entry name" value="Mito_carr"/>
    <property type="match status" value="3"/>
</dbReference>
<dbReference type="SUPFAM" id="SSF103506">
    <property type="entry name" value="Mitochondrial carrier"/>
    <property type="match status" value="1"/>
</dbReference>
<dbReference type="PROSITE" id="PS50920">
    <property type="entry name" value="SOLCAR"/>
    <property type="match status" value="3"/>
</dbReference>